<accession>Q4KMQ1</accession>
<accession>B7ZKU5</accession>
<accession>Q5VSG5</accession>
<accession>Q5VSG6</accession>
<accession>Q6IPP2</accession>
<accession>Q8NCH2</accession>
<gene>
    <name type="primary">TPRN</name>
    <name type="synonym">C9orf75</name>
</gene>
<sequence>MAALGRPGSGPRAAVPAWKREILERKRAKLAALGGGAGPGAAEPEQRVLAESLGPLRENPFMLLEAERRRGGGAAGARLLERYRRVPGVRALRADSVLIIETVPGFPPAPPAPGAAQIRAAEVLVYGAPPGRVSRLLERFDPPAAPRRRGSPERARPPPPPPPPAPPRPPPAAPSPPAAPGPRGGGASPGARRSDFLQKTGSNSFTVHPRGLHRGAGARLLSNGHSAPEPRAGPANRLAGSPPGSGQWKPKVESGDPSLHPPPSPGTPSATPASPPASATPSQRQCVSAATSTNDSFEIRPAPKPVMETIPLGDLQARALASLRANSRNSFMVIPKSKASGAPPPEGRQSVELPKGDLGPASPSQELGSQPVPGGDGAPALGKSPLEVEAQWAVEEGACPRTATALADRAIRWQRPSSPPPFLPAASEEAEPAEGLRVPGLAKNSREYVRPGLPVTFIDEVDSEEAPQAAKLPYLPHPARPLHPARPGCVAELQPRGSNTFTVVPKRKPGTLQDQHFSQANREPRPREAEEEEASCLLGPTLKKRYPTVHEIEVIGGYLALQKSCLTKAGSSRKKMKISFNDKSLQTTFEYPSESSLEQEEEVDQQEEEEEEEEEEEEEEEGSGSEEKPFALFLPRATFVSSVRPESSRLPEGSSGLSSYTPKHSVAFSKWQEQALEQAPREAEPPPVEAMLTPASQNDLSDFRSEPALYF</sequence>
<proteinExistence type="evidence at protein level"/>
<evidence type="ECO:0000250" key="1">
    <source>
        <dbReference type="UniProtKB" id="A2AI08"/>
    </source>
</evidence>
<evidence type="ECO:0000256" key="2">
    <source>
        <dbReference type="SAM" id="MobiDB-lite"/>
    </source>
</evidence>
<evidence type="ECO:0000269" key="3">
    <source>
    </source>
</evidence>
<evidence type="ECO:0000269" key="4">
    <source>
    </source>
</evidence>
<evidence type="ECO:0000269" key="5">
    <source>
    </source>
</evidence>
<evidence type="ECO:0000269" key="6">
    <source>
    </source>
</evidence>
<evidence type="ECO:0000303" key="7">
    <source>
    </source>
</evidence>
<evidence type="ECO:0000303" key="8">
    <source>
    </source>
</evidence>
<evidence type="ECO:0000305" key="9"/>
<evidence type="ECO:0007744" key="10">
    <source>
    </source>
</evidence>
<evidence type="ECO:0007744" key="11">
    <source>
    </source>
</evidence>
<evidence type="ECO:0007829" key="12">
    <source>
        <dbReference type="PDB" id="6Y9Q"/>
    </source>
</evidence>
<feature type="chain" id="PRO_0000330309" description="Taperin">
    <location>
        <begin position="1"/>
        <end position="711"/>
    </location>
</feature>
<feature type="region of interest" description="Disordered" evidence="2">
    <location>
        <begin position="134"/>
        <end position="305"/>
    </location>
</feature>
<feature type="region of interest" description="Disordered" evidence="2">
    <location>
        <begin position="328"/>
        <end position="384"/>
    </location>
</feature>
<feature type="region of interest" description="Disordered" evidence="2">
    <location>
        <begin position="414"/>
        <end position="438"/>
    </location>
</feature>
<feature type="region of interest" description="Disordered" evidence="2">
    <location>
        <begin position="500"/>
        <end position="535"/>
    </location>
</feature>
<feature type="region of interest" description="Disordered" evidence="2">
    <location>
        <begin position="572"/>
        <end position="630"/>
    </location>
</feature>
<feature type="region of interest" description="Disordered" evidence="2">
    <location>
        <begin position="642"/>
        <end position="662"/>
    </location>
</feature>
<feature type="region of interest" description="Disordered" evidence="2">
    <location>
        <begin position="674"/>
        <end position="711"/>
    </location>
</feature>
<feature type="compositionally biased region" description="Pro residues" evidence="2">
    <location>
        <begin position="157"/>
        <end position="180"/>
    </location>
</feature>
<feature type="compositionally biased region" description="Polar residues" evidence="2">
    <location>
        <begin position="197"/>
        <end position="206"/>
    </location>
</feature>
<feature type="compositionally biased region" description="Low complexity" evidence="2">
    <location>
        <begin position="267"/>
        <end position="282"/>
    </location>
</feature>
<feature type="compositionally biased region" description="Polar residues" evidence="2">
    <location>
        <begin position="283"/>
        <end position="296"/>
    </location>
</feature>
<feature type="compositionally biased region" description="Polar residues" evidence="2">
    <location>
        <begin position="512"/>
        <end position="521"/>
    </location>
</feature>
<feature type="compositionally biased region" description="Polar residues" evidence="2">
    <location>
        <begin position="581"/>
        <end position="590"/>
    </location>
</feature>
<feature type="compositionally biased region" description="Acidic residues" evidence="2">
    <location>
        <begin position="597"/>
        <end position="624"/>
    </location>
</feature>
<feature type="modified residue" description="Phosphoserine" evidence="10 11">
    <location>
        <position position="241"/>
    </location>
</feature>
<feature type="modified residue" description="Phosphoserine" evidence="11">
    <location>
        <position position="362"/>
    </location>
</feature>
<feature type="modified residue" description="Phosphoserine" evidence="1">
    <location>
        <position position="418"/>
    </location>
</feature>
<feature type="modified residue" description="Phosphoserine" evidence="1">
    <location>
        <position position="463"/>
    </location>
</feature>
<feature type="splice variant" id="VSP_033027" description="In isoform 2 and isoform 3." evidence="7 8">
    <location>
        <begin position="1"/>
        <end position="306"/>
    </location>
</feature>
<feature type="splice variant" id="VSP_039038" description="In isoform 4." evidence="8">
    <location>
        <begin position="1"/>
        <end position="305"/>
    </location>
</feature>
<feature type="splice variant" id="VSP_039039" description="In isoform 4." evidence="8">
    <original>VMETIP</original>
    <variation>MVSITG</variation>
    <location>
        <begin position="306"/>
        <end position="311"/>
    </location>
</feature>
<feature type="splice variant" id="VSP_033028" description="In isoform 3." evidence="7">
    <original>M</original>
    <variation>MVRCGGVERWGESDTRASPCVHILSSHFQ</variation>
    <location>
        <position position="691"/>
    </location>
</feature>
<feature type="mutagenesis site" description="Abolishes interaction with PPP1CA." evidence="5">
    <original>ISF</original>
    <variation>ASA</variation>
    <location>
        <begin position="578"/>
        <end position="580"/>
    </location>
</feature>
<feature type="sequence conflict" description="In Ref. 1; BAC11169." evidence="9" ref="1">
    <original>K</original>
    <variation>N</variation>
    <location>
        <position position="338"/>
    </location>
</feature>
<feature type="strand" evidence="12">
    <location>
        <begin position="455"/>
        <end position="457"/>
    </location>
</feature>
<feature type="helix" evidence="12">
    <location>
        <begin position="458"/>
        <end position="460"/>
    </location>
</feature>
<name>TPRN_HUMAN</name>
<protein>
    <recommendedName>
        <fullName>Taperin</fullName>
    </recommendedName>
</protein>
<dbReference type="EMBL" id="AK074735">
    <property type="protein sequence ID" value="BAC11169.1"/>
    <property type="molecule type" value="mRNA"/>
</dbReference>
<dbReference type="EMBL" id="AL929554">
    <property type="status" value="NOT_ANNOTATED_CDS"/>
    <property type="molecule type" value="Genomic_DNA"/>
</dbReference>
<dbReference type="EMBL" id="BC071831">
    <property type="protein sequence ID" value="AAH71831.1"/>
    <property type="molecule type" value="mRNA"/>
</dbReference>
<dbReference type="EMBL" id="BC098411">
    <property type="protein sequence ID" value="AAH98411.1"/>
    <property type="molecule type" value="mRNA"/>
</dbReference>
<dbReference type="EMBL" id="BC111500">
    <property type="protein sequence ID" value="AAI11501.1"/>
    <property type="status" value="ALT_INIT"/>
    <property type="molecule type" value="mRNA"/>
</dbReference>
<dbReference type="EMBL" id="BC128601">
    <property type="protein sequence ID" value="AAI28602.1"/>
    <property type="molecule type" value="mRNA"/>
</dbReference>
<dbReference type="EMBL" id="BC143385">
    <property type="protein sequence ID" value="AAI43386.1"/>
    <property type="molecule type" value="mRNA"/>
</dbReference>
<dbReference type="CCDS" id="CCDS56594.1">
    <molecule id="Q4KMQ1-1"/>
</dbReference>
<dbReference type="RefSeq" id="NP_001121700.2">
    <molecule id="Q4KMQ1-1"/>
    <property type="nucleotide sequence ID" value="NM_001128228.3"/>
</dbReference>
<dbReference type="PDB" id="6Y9Q">
    <property type="method" value="X-ray"/>
    <property type="resolution" value="1.31 A"/>
    <property type="chains" value="D=452-468"/>
</dbReference>
<dbReference type="PDBsum" id="6Y9Q"/>
<dbReference type="SMR" id="Q4KMQ1"/>
<dbReference type="BioGRID" id="130345">
    <property type="interactions" value="63"/>
</dbReference>
<dbReference type="FunCoup" id="Q4KMQ1">
    <property type="interactions" value="374"/>
</dbReference>
<dbReference type="IntAct" id="Q4KMQ1">
    <property type="interactions" value="49"/>
</dbReference>
<dbReference type="MINT" id="Q4KMQ1"/>
<dbReference type="STRING" id="9606.ENSP00000387100"/>
<dbReference type="GlyCosmos" id="Q4KMQ1">
    <property type="glycosylation" value="1 site, 1 glycan"/>
</dbReference>
<dbReference type="GlyGen" id="Q4KMQ1">
    <property type="glycosylation" value="4 sites, 1 O-linked glycan (1 site)"/>
</dbReference>
<dbReference type="iPTMnet" id="Q4KMQ1"/>
<dbReference type="PhosphoSitePlus" id="Q4KMQ1"/>
<dbReference type="BioMuta" id="TPRN"/>
<dbReference type="DMDM" id="187470857"/>
<dbReference type="jPOST" id="Q4KMQ1"/>
<dbReference type="MassIVE" id="Q4KMQ1"/>
<dbReference type="PaxDb" id="9606-ENSP00000387100"/>
<dbReference type="PeptideAtlas" id="Q4KMQ1"/>
<dbReference type="ProteomicsDB" id="62199">
    <molecule id="Q4KMQ1-1"/>
</dbReference>
<dbReference type="ProteomicsDB" id="62200">
    <molecule id="Q4KMQ1-2"/>
</dbReference>
<dbReference type="ProteomicsDB" id="62201">
    <molecule id="Q4KMQ1-3"/>
</dbReference>
<dbReference type="ProteomicsDB" id="62202">
    <molecule id="Q4KMQ1-4"/>
</dbReference>
<dbReference type="Pumba" id="Q4KMQ1"/>
<dbReference type="Antibodypedia" id="18953">
    <property type="antibodies" value="37 antibodies from 12 providers"/>
</dbReference>
<dbReference type="DNASU" id="286262"/>
<dbReference type="Ensembl" id="ENST00000409012.6">
    <molecule id="Q4KMQ1-1"/>
    <property type="protein sequence ID" value="ENSP00000387100.4"/>
    <property type="gene ID" value="ENSG00000176058.13"/>
</dbReference>
<dbReference type="GeneID" id="286262"/>
<dbReference type="KEGG" id="hsa:286262"/>
<dbReference type="MANE-Select" id="ENST00000409012.6">
    <property type="protein sequence ID" value="ENSP00000387100.4"/>
    <property type="RefSeq nucleotide sequence ID" value="NM_001128228.3"/>
    <property type="RefSeq protein sequence ID" value="NP_001121700.2"/>
</dbReference>
<dbReference type="UCSC" id="uc004clu.4">
    <molecule id="Q4KMQ1-1"/>
    <property type="organism name" value="human"/>
</dbReference>
<dbReference type="AGR" id="HGNC:26894"/>
<dbReference type="CTD" id="286262"/>
<dbReference type="DisGeNET" id="286262"/>
<dbReference type="GeneCards" id="TPRN"/>
<dbReference type="HGNC" id="HGNC:26894">
    <property type="gene designation" value="TPRN"/>
</dbReference>
<dbReference type="HPA" id="ENSG00000176058">
    <property type="expression patterns" value="Tissue enhanced (brain, pancreas)"/>
</dbReference>
<dbReference type="MalaCards" id="TPRN"/>
<dbReference type="MIM" id="613307">
    <property type="type" value="phenotype"/>
</dbReference>
<dbReference type="MIM" id="613354">
    <property type="type" value="gene"/>
</dbReference>
<dbReference type="neXtProt" id="NX_Q4KMQ1"/>
<dbReference type="OpenTargets" id="ENSG00000176058"/>
<dbReference type="Orphanet" id="90636">
    <property type="disease" value="Rare autosomal recessive non-syndromic sensorineural deafness type DFNB"/>
</dbReference>
<dbReference type="PharmGKB" id="PA165586341"/>
<dbReference type="VEuPathDB" id="HostDB:ENSG00000176058"/>
<dbReference type="eggNOG" id="ENOG502RHCM">
    <property type="taxonomic scope" value="Eukaryota"/>
</dbReference>
<dbReference type="GeneTree" id="ENSGT00530000064035"/>
<dbReference type="HOGENOM" id="CLU_023685_1_0_1"/>
<dbReference type="InParanoid" id="Q4KMQ1"/>
<dbReference type="OMA" id="SKWQQNG"/>
<dbReference type="OrthoDB" id="9945184at2759"/>
<dbReference type="PAN-GO" id="Q4KMQ1">
    <property type="GO annotations" value="4 GO annotations based on evolutionary models"/>
</dbReference>
<dbReference type="PhylomeDB" id="Q4KMQ1"/>
<dbReference type="TreeFam" id="TF333324"/>
<dbReference type="PathwayCommons" id="Q4KMQ1"/>
<dbReference type="Reactome" id="R-HSA-9662360">
    <property type="pathway name" value="Sensory processing of sound by inner hair cells of the cochlea"/>
</dbReference>
<dbReference type="Reactome" id="R-HSA-9662361">
    <property type="pathway name" value="Sensory processing of sound by outer hair cells of the cochlea"/>
</dbReference>
<dbReference type="SignaLink" id="Q4KMQ1"/>
<dbReference type="BioGRID-ORCS" id="286262">
    <property type="hits" value="12 hits in 1153 CRISPR screens"/>
</dbReference>
<dbReference type="ChiTaRS" id="TPRN">
    <property type="organism name" value="human"/>
</dbReference>
<dbReference type="GenomeRNAi" id="286262"/>
<dbReference type="Pharos" id="Q4KMQ1">
    <property type="development level" value="Tbio"/>
</dbReference>
<dbReference type="PRO" id="PR:Q4KMQ1"/>
<dbReference type="Proteomes" id="UP000005640">
    <property type="component" value="Chromosome 9"/>
</dbReference>
<dbReference type="RNAct" id="Q4KMQ1">
    <property type="molecule type" value="protein"/>
</dbReference>
<dbReference type="Bgee" id="ENSG00000176058">
    <property type="expression patterns" value="Expressed in mucosa of transverse colon and 140 other cell types or tissues"/>
</dbReference>
<dbReference type="ExpressionAtlas" id="Q4KMQ1">
    <property type="expression patterns" value="baseline and differential"/>
</dbReference>
<dbReference type="GO" id="GO:0005737">
    <property type="term" value="C:cytoplasm"/>
    <property type="evidence" value="ECO:0000314"/>
    <property type="project" value="UniProtKB"/>
</dbReference>
<dbReference type="GO" id="GO:0005902">
    <property type="term" value="C:microvillus"/>
    <property type="evidence" value="ECO:0000250"/>
    <property type="project" value="UniProtKB"/>
</dbReference>
<dbReference type="GO" id="GO:0005654">
    <property type="term" value="C:nucleoplasm"/>
    <property type="evidence" value="ECO:0000314"/>
    <property type="project" value="UniProtKB"/>
</dbReference>
<dbReference type="GO" id="GO:0032420">
    <property type="term" value="C:stereocilium"/>
    <property type="evidence" value="ECO:0000250"/>
    <property type="project" value="UniProtKB"/>
</dbReference>
<dbReference type="GO" id="GO:0120044">
    <property type="term" value="C:stereocilium base"/>
    <property type="evidence" value="ECO:0000250"/>
    <property type="project" value="UniProtKB"/>
</dbReference>
<dbReference type="GO" id="GO:0003779">
    <property type="term" value="F:actin binding"/>
    <property type="evidence" value="ECO:0000250"/>
    <property type="project" value="UniProtKB"/>
</dbReference>
<dbReference type="GO" id="GO:0008157">
    <property type="term" value="F:protein phosphatase 1 binding"/>
    <property type="evidence" value="ECO:0000353"/>
    <property type="project" value="UniProtKB"/>
</dbReference>
<dbReference type="GO" id="GO:0004865">
    <property type="term" value="F:protein serine/threonine phosphatase inhibitor activity"/>
    <property type="evidence" value="ECO:0000314"/>
    <property type="project" value="UniProtKB"/>
</dbReference>
<dbReference type="GO" id="GO:0060088">
    <property type="term" value="P:auditory receptor cell stereocilium organization"/>
    <property type="evidence" value="ECO:0000318"/>
    <property type="project" value="GO_Central"/>
</dbReference>
<dbReference type="GO" id="GO:0007605">
    <property type="term" value="P:sensory perception of sound"/>
    <property type="evidence" value="ECO:0000315"/>
    <property type="project" value="UniProtKB"/>
</dbReference>
<dbReference type="GO" id="GO:0120045">
    <property type="term" value="P:stereocilium maintenance"/>
    <property type="evidence" value="ECO:0000250"/>
    <property type="project" value="UniProtKB"/>
</dbReference>
<dbReference type="InterPro" id="IPR025903">
    <property type="entry name" value="Phostensin/Taperin_N_dom"/>
</dbReference>
<dbReference type="InterPro" id="IPR025907">
    <property type="entry name" value="Phostensin/Taperin_PP1-bd_dom"/>
</dbReference>
<dbReference type="InterPro" id="IPR026671">
    <property type="entry name" value="PPP1R18/Tprn"/>
</dbReference>
<dbReference type="PANTHER" id="PTHR21685:SF1">
    <property type="entry name" value="TAPERIN"/>
    <property type="match status" value="1"/>
</dbReference>
<dbReference type="PANTHER" id="PTHR21685">
    <property type="entry name" value="TON-B BOX DOMAIN"/>
    <property type="match status" value="1"/>
</dbReference>
<dbReference type="Pfam" id="PF13914">
    <property type="entry name" value="Phostensin"/>
    <property type="match status" value="1"/>
</dbReference>
<dbReference type="Pfam" id="PF13916">
    <property type="entry name" value="Phostensin_N"/>
    <property type="match status" value="1"/>
</dbReference>
<reference key="1">
    <citation type="journal article" date="2004" name="Nat. Genet.">
        <title>Complete sequencing and characterization of 21,243 full-length human cDNAs.</title>
        <authorList>
            <person name="Ota T."/>
            <person name="Suzuki Y."/>
            <person name="Nishikawa T."/>
            <person name="Otsuki T."/>
            <person name="Sugiyama T."/>
            <person name="Irie R."/>
            <person name="Wakamatsu A."/>
            <person name="Hayashi K."/>
            <person name="Sato H."/>
            <person name="Nagai K."/>
            <person name="Kimura K."/>
            <person name="Makita H."/>
            <person name="Sekine M."/>
            <person name="Obayashi M."/>
            <person name="Nishi T."/>
            <person name="Shibahara T."/>
            <person name="Tanaka T."/>
            <person name="Ishii S."/>
            <person name="Yamamoto J."/>
            <person name="Saito K."/>
            <person name="Kawai Y."/>
            <person name="Isono Y."/>
            <person name="Nakamura Y."/>
            <person name="Nagahari K."/>
            <person name="Murakami K."/>
            <person name="Yasuda T."/>
            <person name="Iwayanagi T."/>
            <person name="Wagatsuma M."/>
            <person name="Shiratori A."/>
            <person name="Sudo H."/>
            <person name="Hosoiri T."/>
            <person name="Kaku Y."/>
            <person name="Kodaira H."/>
            <person name="Kondo H."/>
            <person name="Sugawara M."/>
            <person name="Takahashi M."/>
            <person name="Kanda K."/>
            <person name="Yokoi T."/>
            <person name="Furuya T."/>
            <person name="Kikkawa E."/>
            <person name="Omura Y."/>
            <person name="Abe K."/>
            <person name="Kamihara K."/>
            <person name="Katsuta N."/>
            <person name="Sato K."/>
            <person name="Tanikawa M."/>
            <person name="Yamazaki M."/>
            <person name="Ninomiya K."/>
            <person name="Ishibashi T."/>
            <person name="Yamashita H."/>
            <person name="Murakawa K."/>
            <person name="Fujimori K."/>
            <person name="Tanai H."/>
            <person name="Kimata M."/>
            <person name="Watanabe M."/>
            <person name="Hiraoka S."/>
            <person name="Chiba Y."/>
            <person name="Ishida S."/>
            <person name="Ono Y."/>
            <person name="Takiguchi S."/>
            <person name="Watanabe S."/>
            <person name="Yosida M."/>
            <person name="Hotuta T."/>
            <person name="Kusano J."/>
            <person name="Kanehori K."/>
            <person name="Takahashi-Fujii A."/>
            <person name="Hara H."/>
            <person name="Tanase T.-O."/>
            <person name="Nomura Y."/>
            <person name="Togiya S."/>
            <person name="Komai F."/>
            <person name="Hara R."/>
            <person name="Takeuchi K."/>
            <person name="Arita M."/>
            <person name="Imose N."/>
            <person name="Musashino K."/>
            <person name="Yuuki H."/>
            <person name="Oshima A."/>
            <person name="Sasaki N."/>
            <person name="Aotsuka S."/>
            <person name="Yoshikawa Y."/>
            <person name="Matsunawa H."/>
            <person name="Ichihara T."/>
            <person name="Shiohata N."/>
            <person name="Sano S."/>
            <person name="Moriya S."/>
            <person name="Momiyama H."/>
            <person name="Satoh N."/>
            <person name="Takami S."/>
            <person name="Terashima Y."/>
            <person name="Suzuki O."/>
            <person name="Nakagawa S."/>
            <person name="Senoh A."/>
            <person name="Mizoguchi H."/>
            <person name="Goto Y."/>
            <person name="Shimizu F."/>
            <person name="Wakebe H."/>
            <person name="Hishigaki H."/>
            <person name="Watanabe T."/>
            <person name="Sugiyama A."/>
            <person name="Takemoto M."/>
            <person name="Kawakami B."/>
            <person name="Yamazaki M."/>
            <person name="Watanabe K."/>
            <person name="Kumagai A."/>
            <person name="Itakura S."/>
            <person name="Fukuzumi Y."/>
            <person name="Fujimori Y."/>
            <person name="Komiyama M."/>
            <person name="Tashiro H."/>
            <person name="Tanigami A."/>
            <person name="Fujiwara T."/>
            <person name="Ono T."/>
            <person name="Yamada K."/>
            <person name="Fujii Y."/>
            <person name="Ozaki K."/>
            <person name="Hirao M."/>
            <person name="Ohmori Y."/>
            <person name="Kawabata A."/>
            <person name="Hikiji T."/>
            <person name="Kobatake N."/>
            <person name="Inagaki H."/>
            <person name="Ikema Y."/>
            <person name="Okamoto S."/>
            <person name="Okitani R."/>
            <person name="Kawakami T."/>
            <person name="Noguchi S."/>
            <person name="Itoh T."/>
            <person name="Shigeta K."/>
            <person name="Senba T."/>
            <person name="Matsumura K."/>
            <person name="Nakajima Y."/>
            <person name="Mizuno T."/>
            <person name="Morinaga M."/>
            <person name="Sasaki M."/>
            <person name="Togashi T."/>
            <person name="Oyama M."/>
            <person name="Hata H."/>
            <person name="Watanabe M."/>
            <person name="Komatsu T."/>
            <person name="Mizushima-Sugano J."/>
            <person name="Satoh T."/>
            <person name="Shirai Y."/>
            <person name="Takahashi Y."/>
            <person name="Nakagawa K."/>
            <person name="Okumura K."/>
            <person name="Nagase T."/>
            <person name="Nomura N."/>
            <person name="Kikuchi H."/>
            <person name="Masuho Y."/>
            <person name="Yamashita R."/>
            <person name="Nakai K."/>
            <person name="Yada T."/>
            <person name="Nakamura Y."/>
            <person name="Ohara O."/>
            <person name="Isogai T."/>
            <person name="Sugano S."/>
        </authorList>
    </citation>
    <scope>NUCLEOTIDE SEQUENCE [LARGE SCALE MRNA] (ISOFORM 3)</scope>
</reference>
<reference key="2">
    <citation type="journal article" date="2004" name="Nature">
        <title>DNA sequence and analysis of human chromosome 9.</title>
        <authorList>
            <person name="Humphray S.J."/>
            <person name="Oliver K."/>
            <person name="Hunt A.R."/>
            <person name="Plumb R.W."/>
            <person name="Loveland J.E."/>
            <person name="Howe K.L."/>
            <person name="Andrews T.D."/>
            <person name="Searle S."/>
            <person name="Hunt S.E."/>
            <person name="Scott C.E."/>
            <person name="Jones M.C."/>
            <person name="Ainscough R."/>
            <person name="Almeida J.P."/>
            <person name="Ambrose K.D."/>
            <person name="Ashwell R.I.S."/>
            <person name="Babbage A.K."/>
            <person name="Babbage S."/>
            <person name="Bagguley C.L."/>
            <person name="Bailey J."/>
            <person name="Banerjee R."/>
            <person name="Barker D.J."/>
            <person name="Barlow K.F."/>
            <person name="Bates K."/>
            <person name="Beasley H."/>
            <person name="Beasley O."/>
            <person name="Bird C.P."/>
            <person name="Bray-Allen S."/>
            <person name="Brown A.J."/>
            <person name="Brown J.Y."/>
            <person name="Burford D."/>
            <person name="Burrill W."/>
            <person name="Burton J."/>
            <person name="Carder C."/>
            <person name="Carter N.P."/>
            <person name="Chapman J.C."/>
            <person name="Chen Y."/>
            <person name="Clarke G."/>
            <person name="Clark S.Y."/>
            <person name="Clee C.M."/>
            <person name="Clegg S."/>
            <person name="Collier R.E."/>
            <person name="Corby N."/>
            <person name="Crosier M."/>
            <person name="Cummings A.T."/>
            <person name="Davies J."/>
            <person name="Dhami P."/>
            <person name="Dunn M."/>
            <person name="Dutta I."/>
            <person name="Dyer L.W."/>
            <person name="Earthrowl M.E."/>
            <person name="Faulkner L."/>
            <person name="Fleming C.J."/>
            <person name="Frankish A."/>
            <person name="Frankland J.A."/>
            <person name="French L."/>
            <person name="Fricker D.G."/>
            <person name="Garner P."/>
            <person name="Garnett J."/>
            <person name="Ghori J."/>
            <person name="Gilbert J.G.R."/>
            <person name="Glison C."/>
            <person name="Grafham D.V."/>
            <person name="Gribble S."/>
            <person name="Griffiths C."/>
            <person name="Griffiths-Jones S."/>
            <person name="Grocock R."/>
            <person name="Guy J."/>
            <person name="Hall R.E."/>
            <person name="Hammond S."/>
            <person name="Harley J.L."/>
            <person name="Harrison E.S.I."/>
            <person name="Hart E.A."/>
            <person name="Heath P.D."/>
            <person name="Henderson C.D."/>
            <person name="Hopkins B.L."/>
            <person name="Howard P.J."/>
            <person name="Howden P.J."/>
            <person name="Huckle E."/>
            <person name="Johnson C."/>
            <person name="Johnson D."/>
            <person name="Joy A.A."/>
            <person name="Kay M."/>
            <person name="Keenan S."/>
            <person name="Kershaw J.K."/>
            <person name="Kimberley A.M."/>
            <person name="King A."/>
            <person name="Knights A."/>
            <person name="Laird G.K."/>
            <person name="Langford C."/>
            <person name="Lawlor S."/>
            <person name="Leongamornlert D.A."/>
            <person name="Leversha M."/>
            <person name="Lloyd C."/>
            <person name="Lloyd D.M."/>
            <person name="Lovell J."/>
            <person name="Martin S."/>
            <person name="Mashreghi-Mohammadi M."/>
            <person name="Matthews L."/>
            <person name="McLaren S."/>
            <person name="McLay K.E."/>
            <person name="McMurray A."/>
            <person name="Milne S."/>
            <person name="Nickerson T."/>
            <person name="Nisbett J."/>
            <person name="Nordsiek G."/>
            <person name="Pearce A.V."/>
            <person name="Peck A.I."/>
            <person name="Porter K.M."/>
            <person name="Pandian R."/>
            <person name="Pelan S."/>
            <person name="Phillimore B."/>
            <person name="Povey S."/>
            <person name="Ramsey Y."/>
            <person name="Rand V."/>
            <person name="Scharfe M."/>
            <person name="Sehra H.K."/>
            <person name="Shownkeen R."/>
            <person name="Sims S.K."/>
            <person name="Skuce C.D."/>
            <person name="Smith M."/>
            <person name="Steward C.A."/>
            <person name="Swarbreck D."/>
            <person name="Sycamore N."/>
            <person name="Tester J."/>
            <person name="Thorpe A."/>
            <person name="Tracey A."/>
            <person name="Tromans A."/>
            <person name="Thomas D.W."/>
            <person name="Wall M."/>
            <person name="Wallis J.M."/>
            <person name="West A.P."/>
            <person name="Whitehead S.L."/>
            <person name="Willey D.L."/>
            <person name="Williams S.A."/>
            <person name="Wilming L."/>
            <person name="Wray P.W."/>
            <person name="Young L."/>
            <person name="Ashurst J.L."/>
            <person name="Coulson A."/>
            <person name="Blocker H."/>
            <person name="Durbin R.M."/>
            <person name="Sulston J.E."/>
            <person name="Hubbard T."/>
            <person name="Jackson M.J."/>
            <person name="Bentley D.R."/>
            <person name="Beck S."/>
            <person name="Rogers J."/>
            <person name="Dunham I."/>
        </authorList>
    </citation>
    <scope>NUCLEOTIDE SEQUENCE [LARGE SCALE GENOMIC DNA]</scope>
</reference>
<reference key="3">
    <citation type="journal article" date="2004" name="Genome Res.">
        <title>The status, quality, and expansion of the NIH full-length cDNA project: the Mammalian Gene Collection (MGC).</title>
        <authorList>
            <consortium name="The MGC Project Team"/>
        </authorList>
    </citation>
    <scope>NUCLEOTIDE SEQUENCE [LARGE SCALE MRNA] (ISOFORMS 2 AND 4)</scope>
    <scope>NUCLEOTIDE SEQUENCE [LARGE SCALE MRNA] OF 189-711 (ISOFORM 1)</scope>
    <source>
        <tissue>Brain</tissue>
        <tissue>Ovary</tissue>
    </source>
</reference>
<reference key="4">
    <citation type="journal article" date="2006" name="Cell">
        <title>Global, in vivo, and site-specific phosphorylation dynamics in signaling networks.</title>
        <authorList>
            <person name="Olsen J.V."/>
            <person name="Blagoev B."/>
            <person name="Gnad F."/>
            <person name="Macek B."/>
            <person name="Kumar C."/>
            <person name="Mortensen P."/>
            <person name="Mann M."/>
        </authorList>
    </citation>
    <scope>IDENTIFICATION BY MASS SPECTROMETRY [LARGE SCALE ANALYSIS]</scope>
    <source>
        <tissue>Cervix carcinoma</tissue>
    </source>
</reference>
<reference key="5">
    <citation type="journal article" date="2008" name="Proc. Natl. Acad. Sci. U.S.A.">
        <title>A quantitative atlas of mitotic phosphorylation.</title>
        <authorList>
            <person name="Dephoure N."/>
            <person name="Zhou C."/>
            <person name="Villen J."/>
            <person name="Beausoleil S.A."/>
            <person name="Bakalarski C.E."/>
            <person name="Elledge S.J."/>
            <person name="Gygi S.P."/>
        </authorList>
    </citation>
    <scope>IDENTIFICATION BY MASS SPECTROMETRY [LARGE SCALE ANALYSIS]</scope>
    <source>
        <tissue>Cervix carcinoma</tissue>
    </source>
</reference>
<reference key="6">
    <citation type="journal article" date="2010" name="Am. J. Hum. Genet.">
        <title>Targeted capture and next-generation sequencing identifies C9orf75, encoding taperin, as the mutated gene in nonsyndromic deafness DFNB79.</title>
        <authorList>
            <person name="Rehman A.U."/>
            <person name="Morell R.J."/>
            <person name="Belyantseva I.A."/>
            <person name="Khan S.Y."/>
            <person name="Boger E.T."/>
            <person name="Shahzad M."/>
            <person name="Ahmed Z.M."/>
            <person name="Riazuddin S."/>
            <person name="Khan S.N."/>
            <person name="Riazuddin S."/>
            <person name="Friedman T.B."/>
        </authorList>
    </citation>
    <scope>INVOLVEMENT IN DFNB79</scope>
</reference>
<reference key="7">
    <citation type="journal article" date="2010" name="Am. J. Hum. Genet.">
        <title>Mutations in TPRN cause a progressive form of autosomal-recessive nonsyndromic hearing loss.</title>
        <authorList>
            <person name="Li Y."/>
            <person name="Pohl E."/>
            <person name="Boulouiz R."/>
            <person name="Schraders M."/>
            <person name="Nurnberg G."/>
            <person name="Charif M."/>
            <person name="Admiraal R.J."/>
            <person name="von Ameln S."/>
            <person name="Baessmann I."/>
            <person name="Kandil M."/>
            <person name="Veltman J.A."/>
            <person name="Nurnberg P."/>
            <person name="Kubisch C."/>
            <person name="Barakat A."/>
            <person name="Kremer H."/>
            <person name="Wollnik B."/>
        </authorList>
    </citation>
    <scope>TISSUE SPECIFICITY</scope>
    <scope>INVOLVEMENT IN DFNB79</scope>
</reference>
<reference key="8">
    <citation type="journal article" date="2010" name="Sci. Signal.">
        <title>Quantitative phosphoproteomics reveals widespread full phosphorylation site occupancy during mitosis.</title>
        <authorList>
            <person name="Olsen J.V."/>
            <person name="Vermeulen M."/>
            <person name="Santamaria A."/>
            <person name="Kumar C."/>
            <person name="Miller M.L."/>
            <person name="Jensen L.J."/>
            <person name="Gnad F."/>
            <person name="Cox J."/>
            <person name="Jensen T.S."/>
            <person name="Nigg E.A."/>
            <person name="Brunak S."/>
            <person name="Mann M."/>
        </authorList>
    </citation>
    <scope>PHOSPHORYLATION [LARGE SCALE ANALYSIS] AT SER-241</scope>
    <scope>IDENTIFICATION BY MASS SPECTROMETRY [LARGE SCALE ANALYSIS]</scope>
    <source>
        <tissue>Cervix carcinoma</tissue>
    </source>
</reference>
<reference key="9">
    <citation type="journal article" date="2011" name="Sci. Signal.">
        <title>System-wide temporal characterization of the proteome and phosphoproteome of human embryonic stem cell differentiation.</title>
        <authorList>
            <person name="Rigbolt K.T."/>
            <person name="Prokhorova T.A."/>
            <person name="Akimov V."/>
            <person name="Henningsen J."/>
            <person name="Johansen P.T."/>
            <person name="Kratchmarova I."/>
            <person name="Kassem M."/>
            <person name="Mann M."/>
            <person name="Olsen J.V."/>
            <person name="Blagoev B."/>
        </authorList>
    </citation>
    <scope>IDENTIFICATION BY MASS SPECTROMETRY [LARGE SCALE ANALYSIS]</scope>
</reference>
<reference key="10">
    <citation type="journal article" date="2012" name="Biol. Open">
        <title>Taperin (c9orf75), a mutated gene in nonsyndromic deafness, encodes a vertebrate specific, nuclear localized protein phosphatase one alpha (PP1alpha) docking protein.</title>
        <authorList>
            <person name="Ferrar T."/>
            <person name="Chamousset D."/>
            <person name="De Wever V."/>
            <person name="Nimick M."/>
            <person name="Andersen J."/>
            <person name="Trinkle-Mulcahy L."/>
            <person name="Moorhead G.B."/>
        </authorList>
    </citation>
    <scope>FUNCTION</scope>
    <scope>INTERACTION WITH PPP1CA; XRCC5; XRCC6; PARP1; TOP1 AND TOP2A</scope>
    <scope>SUBCELLULAR LOCATION</scope>
    <scope>MUTAGENESIS OF 577-LYS--PHE-580</scope>
</reference>
<reference key="11">
    <citation type="journal article" date="2013" name="J. Proteome Res.">
        <title>Toward a comprehensive characterization of a human cancer cell phosphoproteome.</title>
        <authorList>
            <person name="Zhou H."/>
            <person name="Di Palma S."/>
            <person name="Preisinger C."/>
            <person name="Peng M."/>
            <person name="Polat A.N."/>
            <person name="Heck A.J."/>
            <person name="Mohammed S."/>
        </authorList>
    </citation>
    <scope>PHOSPHORYLATION [LARGE SCALE ANALYSIS] AT SER-241 AND SER-362</scope>
    <scope>IDENTIFICATION BY MASS SPECTROMETRY [LARGE SCALE ANALYSIS]</scope>
    <source>
        <tissue>Cervix carcinoma</tissue>
        <tissue>Erythroleukemia</tissue>
    </source>
</reference>
<reference key="12">
    <citation type="journal article" date="2014" name="Cytoskeleton">
        <title>CLIC5 stabilizes membrane-actin filament linkages at the base of hair cell stereocilia in a molecular complex with radixin, taperin, and myosin VI.</title>
        <authorList>
            <person name="Salles F.T."/>
            <person name="Andrade L.R."/>
            <person name="Tanda S."/>
            <person name="Grati M."/>
            <person name="Plona K.L."/>
            <person name="Gagnon L.H."/>
            <person name="Johnson K.R."/>
            <person name="Kachar B."/>
            <person name="Berryman M.A."/>
        </authorList>
    </citation>
    <scope>INTERACTION WITH CLIC5</scope>
</reference>
<keyword id="KW-0002">3D-structure</keyword>
<keyword id="KW-0009">Actin-binding</keyword>
<keyword id="KW-0025">Alternative splicing</keyword>
<keyword id="KW-0966">Cell projection</keyword>
<keyword id="KW-0963">Cytoplasm</keyword>
<keyword id="KW-0209">Deafness</keyword>
<keyword id="KW-1009">Hearing</keyword>
<keyword id="KW-1010">Non-syndromic deafness</keyword>
<keyword id="KW-0539">Nucleus</keyword>
<keyword id="KW-0597">Phosphoprotein</keyword>
<keyword id="KW-0650">Protein phosphatase inhibitor</keyword>
<keyword id="KW-1267">Proteomics identification</keyword>
<keyword id="KW-1185">Reference proteome</keyword>
<comment type="function">
    <text evidence="1 5">Essential for hearing (By similarity). Required for maintenance of stereocilia on both inner and outer hair cells (By similarity). Necessary for the integrity of the stereociliary rootlet (By similarity). May act as an actin cytoskeleton regulator involved in the regulation of actin dynamics at the pointed end in hair cells (By similarity). Forms rings at the base of stereocilia and binds actin filaments in the stereocilia which may stabilize the stereocilia (By similarity). Acts as a strong inhibitor of PPP1CA phosphatase activity (PubMed:23213405). Recruited to sites of DNA damage and may play a role in DNA damage repair (PubMed:23213405).</text>
</comment>
<comment type="subunit">
    <text evidence="1 5 6">Interacts with GRXCR2; the interaction restricts TPRN to the stereocilum basal region (By similarity). Interacts with actin ACTB; the interaction may stabilize stereocilia (By similarity). Interacts with CLIC5 (PubMed:24285636). Interacts with PTPRQ (By similarity). TPRN, CLIC5 and PTPQR form concentric rings at the base of stereocilia and may form a complex (By similarity). Interacts with phosphatase PPP1CA; the interaction results in inhibition of PPC1A phosphatase activity (PubMed:23213405). Interacts with DNA damage response proteins XRCC6/KU70, XRCC5/KU80, PARP1, TOP1 and TOP2A; these interactions recruit TPRN to sites of DNA damage where it may play a role in DNA repair (PubMed:23213405).</text>
</comment>
<comment type="interaction">
    <interactant intactId="EBI-3942777">
        <id>Q4KMQ1</id>
    </interactant>
    <interactant intactId="EBI-357253">
        <id>P62136</id>
        <label>PPP1CA</label>
    </interactant>
    <organismsDiffer>false</organismsDiffer>
    <experiments>5</experiments>
</comment>
<comment type="interaction">
    <interactant intactId="EBI-11978969">
        <id>Q4KMQ1-2</id>
    </interactant>
    <interactant intactId="EBI-347404">
        <id>O00299</id>
        <label>CLIC1</label>
    </interactant>
    <organismsDiffer>false</organismsDiffer>
    <experiments>8</experiments>
</comment>
<comment type="interaction">
    <interactant intactId="EBI-11978969">
        <id>Q4KMQ1-2</id>
    </interactant>
    <interactant intactId="EBI-6286019">
        <id>O15247</id>
        <label>CLIC2</label>
    </interactant>
    <organismsDiffer>false</organismsDiffer>
    <experiments>3</experiments>
</comment>
<comment type="interaction">
    <interactant intactId="EBI-11978969">
        <id>Q4KMQ1-2</id>
    </interactant>
    <interactant intactId="EBI-1057480">
        <id>Q9Y696</id>
        <label>CLIC4</label>
    </interactant>
    <organismsDiffer>false</organismsDiffer>
    <experiments>4</experiments>
</comment>
<comment type="interaction">
    <interactant intactId="EBI-11978969">
        <id>Q4KMQ1-2</id>
    </interactant>
    <interactant intactId="EBI-13076412">
        <id>Q9NZA1-2</id>
        <label>CLIC5</label>
    </interactant>
    <organismsDiffer>false</organismsDiffer>
    <experiments>6</experiments>
</comment>
<comment type="interaction">
    <interactant intactId="EBI-11978969">
        <id>Q4KMQ1-2</id>
    </interactant>
    <interactant intactId="EBI-7950783">
        <id>Q96JP2</id>
        <label>MYO15B</label>
    </interactant>
    <organismsDiffer>false</organismsDiffer>
    <experiments>3</experiments>
</comment>
<comment type="interaction">
    <interactant intactId="EBI-11978969">
        <id>Q4KMQ1-2</id>
    </interactant>
    <interactant intactId="EBI-357253">
        <id>P62136</id>
        <label>PPP1CA</label>
    </interactant>
    <organismsDiffer>false</organismsDiffer>
    <experiments>6</experiments>
</comment>
<comment type="interaction">
    <interactant intactId="EBI-11978969">
        <id>Q4KMQ1-2</id>
    </interactant>
    <interactant intactId="EBI-356283">
        <id>P36873</id>
        <label>PPP1CC</label>
    </interactant>
    <organismsDiffer>false</organismsDiffer>
    <experiments>3</experiments>
</comment>
<comment type="interaction">
    <interactant intactId="EBI-11978969">
        <id>Q4KMQ1-2</id>
    </interactant>
    <interactant intactId="EBI-310886">
        <id>Q9P202</id>
        <label>WHRN</label>
    </interactant>
    <organismsDiffer>false</organismsDiffer>
    <experiments>7</experiments>
</comment>
<comment type="subcellular location">
    <subcellularLocation>
        <location evidence="1">Cell projection</location>
        <location evidence="1">Stereocilium</location>
    </subcellularLocation>
    <subcellularLocation>
        <location evidence="1">Cell projection</location>
        <location evidence="1">Microvillus</location>
    </subcellularLocation>
    <subcellularLocation>
        <location evidence="5">Nucleus</location>
        <location evidence="5">Nucleoplasm</location>
    </subcellularLocation>
    <subcellularLocation>
        <location evidence="5">Cytoplasm</location>
    </subcellularLocation>
    <text evidence="1 5">Localized prominently at the basal taper region of hair cell stereocilia (By similarity). Forms organized ring-like structures with diameters ranging from 150 to 200 nm in the stereocilium taper region (By similarity). Detected in microvilli of inner hair cell supporting cells (By similarity). Predominantly nuclear in non-stereocilium cells but can shuttle between the nucleus and the cytoplasm (PubMed:23213405).</text>
</comment>
<comment type="alternative products">
    <event type="alternative splicing"/>
    <isoform>
        <id>Q4KMQ1-1</id>
        <name>1</name>
        <sequence type="displayed"/>
    </isoform>
    <isoform>
        <id>Q4KMQ1-2</id>
        <name>2</name>
        <sequence type="described" ref="VSP_033027"/>
    </isoform>
    <isoform>
        <id>Q4KMQ1-3</id>
        <name>3</name>
        <sequence type="described" ref="VSP_033027 VSP_033028"/>
    </isoform>
    <isoform>
        <id>Q4KMQ1-4</id>
        <name>4</name>
        <sequence type="described" ref="VSP_039038 VSP_039039"/>
    </isoform>
</comment>
<comment type="tissue specificity">
    <text evidence="3">Expression is detected in fetal cochlea.</text>
</comment>
<comment type="disease" evidence="3 4">
    <disease id="DI-02596">
        <name>Deafness, autosomal recessive, 79</name>
        <acronym>DFNB79</acronym>
        <description>A form of non-syndromic deafness characterized by progressive and severe sensorineural hearing loss. There are no symptoms of vestibular dysfunction.</description>
        <dbReference type="MIM" id="613307"/>
    </disease>
    <text>The disease is caused by variants affecting the gene represented in this entry.</text>
</comment>
<comment type="similarity">
    <text evidence="9">Belongs to the taperin family.</text>
</comment>
<comment type="sequence caution" evidence="9">
    <conflict type="erroneous initiation">
        <sequence resource="EMBL-CDS" id="AAI11501"/>
    </conflict>
    <text>Truncated N-terminus.</text>
</comment>
<organism>
    <name type="scientific">Homo sapiens</name>
    <name type="common">Human</name>
    <dbReference type="NCBI Taxonomy" id="9606"/>
    <lineage>
        <taxon>Eukaryota</taxon>
        <taxon>Metazoa</taxon>
        <taxon>Chordata</taxon>
        <taxon>Craniata</taxon>
        <taxon>Vertebrata</taxon>
        <taxon>Euteleostomi</taxon>
        <taxon>Mammalia</taxon>
        <taxon>Eutheria</taxon>
        <taxon>Euarchontoglires</taxon>
        <taxon>Primates</taxon>
        <taxon>Haplorrhini</taxon>
        <taxon>Catarrhini</taxon>
        <taxon>Hominidae</taxon>
        <taxon>Homo</taxon>
    </lineage>
</organism>